<dbReference type="EC" id="4.2.1.9" evidence="1"/>
<dbReference type="EMBL" id="AF481102">
    <property type="protein sequence ID" value="AAM75969.1"/>
    <property type="molecule type" value="Genomic_DNA"/>
</dbReference>
<dbReference type="SMR" id="Q8KTS9"/>
<dbReference type="STRING" id="1053648.TCP_009"/>
<dbReference type="UniPathway" id="UPA00047">
    <property type="reaction ID" value="UER00057"/>
</dbReference>
<dbReference type="UniPathway" id="UPA00049">
    <property type="reaction ID" value="UER00061"/>
</dbReference>
<dbReference type="GO" id="GO:0051537">
    <property type="term" value="F:2 iron, 2 sulfur cluster binding"/>
    <property type="evidence" value="ECO:0007669"/>
    <property type="project" value="UniProtKB-UniRule"/>
</dbReference>
<dbReference type="GO" id="GO:0004160">
    <property type="term" value="F:dihydroxy-acid dehydratase activity"/>
    <property type="evidence" value="ECO:0007669"/>
    <property type="project" value="UniProtKB-UniRule"/>
</dbReference>
<dbReference type="GO" id="GO:0000287">
    <property type="term" value="F:magnesium ion binding"/>
    <property type="evidence" value="ECO:0007669"/>
    <property type="project" value="UniProtKB-UniRule"/>
</dbReference>
<dbReference type="GO" id="GO:0009097">
    <property type="term" value="P:isoleucine biosynthetic process"/>
    <property type="evidence" value="ECO:0007669"/>
    <property type="project" value="UniProtKB-UniRule"/>
</dbReference>
<dbReference type="GO" id="GO:0009099">
    <property type="term" value="P:L-valine biosynthetic process"/>
    <property type="evidence" value="ECO:0007669"/>
    <property type="project" value="UniProtKB-UniRule"/>
</dbReference>
<dbReference type="FunFam" id="3.50.30.80:FF:000001">
    <property type="entry name" value="Dihydroxy-acid dehydratase"/>
    <property type="match status" value="1"/>
</dbReference>
<dbReference type="Gene3D" id="3.50.30.80">
    <property type="entry name" value="IlvD/EDD C-terminal domain-like"/>
    <property type="match status" value="1"/>
</dbReference>
<dbReference type="HAMAP" id="MF_00012">
    <property type="entry name" value="IlvD"/>
    <property type="match status" value="1"/>
</dbReference>
<dbReference type="InterPro" id="IPR050165">
    <property type="entry name" value="DHAD_IlvD/Edd"/>
</dbReference>
<dbReference type="InterPro" id="IPR042096">
    <property type="entry name" value="Dihydro-acid_dehy_C"/>
</dbReference>
<dbReference type="InterPro" id="IPR004404">
    <property type="entry name" value="DihydroxyA_deHydtase"/>
</dbReference>
<dbReference type="InterPro" id="IPR020558">
    <property type="entry name" value="DiOHA_6PGluconate_deHydtase_CS"/>
</dbReference>
<dbReference type="InterPro" id="IPR056740">
    <property type="entry name" value="ILV_EDD_C"/>
</dbReference>
<dbReference type="InterPro" id="IPR000581">
    <property type="entry name" value="ILV_EDD_N"/>
</dbReference>
<dbReference type="InterPro" id="IPR037237">
    <property type="entry name" value="IlvD/EDD_N"/>
</dbReference>
<dbReference type="NCBIfam" id="TIGR00110">
    <property type="entry name" value="ilvD"/>
    <property type="match status" value="1"/>
</dbReference>
<dbReference type="NCBIfam" id="NF002068">
    <property type="entry name" value="PRK00911.1"/>
    <property type="match status" value="1"/>
</dbReference>
<dbReference type="PANTHER" id="PTHR21000">
    <property type="entry name" value="DIHYDROXY-ACID DEHYDRATASE DAD"/>
    <property type="match status" value="1"/>
</dbReference>
<dbReference type="PANTHER" id="PTHR21000:SF5">
    <property type="entry name" value="DIHYDROXY-ACID DEHYDRATASE, MITOCHONDRIAL"/>
    <property type="match status" value="1"/>
</dbReference>
<dbReference type="Pfam" id="PF24877">
    <property type="entry name" value="ILV_EDD_C"/>
    <property type="match status" value="1"/>
</dbReference>
<dbReference type="Pfam" id="PF00920">
    <property type="entry name" value="ILVD_EDD_N"/>
    <property type="match status" value="1"/>
</dbReference>
<dbReference type="SUPFAM" id="SSF143975">
    <property type="entry name" value="IlvD/EDD N-terminal domain-like"/>
    <property type="match status" value="1"/>
</dbReference>
<dbReference type="SUPFAM" id="SSF52016">
    <property type="entry name" value="LeuD/IlvD-like"/>
    <property type="match status" value="1"/>
</dbReference>
<dbReference type="PROSITE" id="PS00886">
    <property type="entry name" value="ILVD_EDD_1"/>
    <property type="match status" value="1"/>
</dbReference>
<dbReference type="PROSITE" id="PS00887">
    <property type="entry name" value="ILVD_EDD_2"/>
    <property type="match status" value="1"/>
</dbReference>
<protein>
    <recommendedName>
        <fullName evidence="1">Dihydroxy-acid dehydratase</fullName>
        <shortName evidence="1">DAD</shortName>
        <ecNumber evidence="1">4.2.1.9</ecNumber>
    </recommendedName>
</protein>
<proteinExistence type="inferred from homology"/>
<reference key="1">
    <citation type="journal article" date="2002" name="Appl. Environ. Microbiol.">
        <title>The genetic properties of the primary endosymbionts of mealybugs differ from those of other endosymbionts of plant sap-sucking insects.</title>
        <authorList>
            <person name="Baumann L."/>
            <person name="Thao M.L."/>
            <person name="Hess J.M."/>
            <person name="Johnson M.W."/>
            <person name="Baumann P."/>
        </authorList>
    </citation>
    <scope>NUCLEOTIDE SEQUENCE [GENOMIC DNA]</scope>
</reference>
<accession>Q8KTS9</accession>
<keyword id="KW-0001">2Fe-2S</keyword>
<keyword id="KW-0028">Amino-acid biosynthesis</keyword>
<keyword id="KW-0100">Branched-chain amino acid biosynthesis</keyword>
<keyword id="KW-0408">Iron</keyword>
<keyword id="KW-0411">Iron-sulfur</keyword>
<keyword id="KW-0456">Lyase</keyword>
<keyword id="KW-0460">Magnesium</keyword>
<keyword id="KW-0479">Metal-binding</keyword>
<organism>
    <name type="scientific">Tremblaya princeps</name>
    <dbReference type="NCBI Taxonomy" id="189385"/>
    <lineage>
        <taxon>Bacteria</taxon>
        <taxon>Pseudomonadati</taxon>
        <taxon>Pseudomonadota</taxon>
        <taxon>Betaproteobacteria</taxon>
        <taxon>Candidatus Tremblaya</taxon>
    </lineage>
</organism>
<evidence type="ECO:0000255" key="1">
    <source>
        <dbReference type="HAMAP-Rule" id="MF_00012"/>
    </source>
</evidence>
<comment type="function">
    <text evidence="1">Functions in the biosynthesis of branched-chain amino acids. Catalyzes the dehydration of (2R,3R)-2,3-dihydroxy-3-methylpentanoate (2,3-dihydroxy-3-methylvalerate) into 2-oxo-3-methylpentanoate (2-oxo-3-methylvalerate) and of (2R)-2,3-dihydroxy-3-methylbutanoate (2,3-dihydroxyisovalerate) into 2-oxo-3-methylbutanoate (2-oxoisovalerate), the penultimate precursor to L-isoleucine and L-valine, respectively.</text>
</comment>
<comment type="catalytic activity">
    <reaction evidence="1">
        <text>(2R)-2,3-dihydroxy-3-methylbutanoate = 3-methyl-2-oxobutanoate + H2O</text>
        <dbReference type="Rhea" id="RHEA:24809"/>
        <dbReference type="ChEBI" id="CHEBI:11851"/>
        <dbReference type="ChEBI" id="CHEBI:15377"/>
        <dbReference type="ChEBI" id="CHEBI:49072"/>
        <dbReference type="EC" id="4.2.1.9"/>
    </reaction>
    <physiologicalReaction direction="left-to-right" evidence="1">
        <dbReference type="Rhea" id="RHEA:24810"/>
    </physiologicalReaction>
</comment>
<comment type="catalytic activity">
    <reaction evidence="1">
        <text>(2R,3R)-2,3-dihydroxy-3-methylpentanoate = (S)-3-methyl-2-oxopentanoate + H2O</text>
        <dbReference type="Rhea" id="RHEA:27694"/>
        <dbReference type="ChEBI" id="CHEBI:15377"/>
        <dbReference type="ChEBI" id="CHEBI:35146"/>
        <dbReference type="ChEBI" id="CHEBI:49258"/>
        <dbReference type="EC" id="4.2.1.9"/>
    </reaction>
    <physiologicalReaction direction="left-to-right" evidence="1">
        <dbReference type="Rhea" id="RHEA:27695"/>
    </physiologicalReaction>
</comment>
<comment type="cofactor">
    <cofactor evidence="1">
        <name>[2Fe-2S] cluster</name>
        <dbReference type="ChEBI" id="CHEBI:190135"/>
    </cofactor>
    <text evidence="1">Binds 1 [2Fe-2S] cluster per subunit. This cluster acts as a Lewis acid cofactor.</text>
</comment>
<comment type="cofactor">
    <cofactor evidence="1">
        <name>Mg(2+)</name>
        <dbReference type="ChEBI" id="CHEBI:18420"/>
    </cofactor>
</comment>
<comment type="pathway">
    <text evidence="1">Amino-acid biosynthesis; L-isoleucine biosynthesis; L-isoleucine from 2-oxobutanoate: step 3/4.</text>
</comment>
<comment type="pathway">
    <text evidence="1">Amino-acid biosynthesis; L-valine biosynthesis; L-valine from pyruvate: step 3/4.</text>
</comment>
<comment type="subunit">
    <text evidence="1">Homodimer.</text>
</comment>
<comment type="similarity">
    <text evidence="1">Belongs to the IlvD/Edd family.</text>
</comment>
<gene>
    <name evidence="1" type="primary">ilvD</name>
</gene>
<feature type="chain" id="PRO_0000103455" description="Dihydroxy-acid dehydratase">
    <location>
        <begin position="1"/>
        <end position="554"/>
    </location>
</feature>
<feature type="active site" description="Proton acceptor" evidence="1">
    <location>
        <position position="470"/>
    </location>
</feature>
<feature type="binding site" evidence="1">
    <location>
        <position position="48"/>
    </location>
    <ligand>
        <name>[2Fe-2S] cluster</name>
        <dbReference type="ChEBI" id="CHEBI:190135"/>
    </ligand>
</feature>
<feature type="binding site" evidence="1">
    <location>
        <position position="80"/>
    </location>
    <ligand>
        <name>Mg(2+)</name>
        <dbReference type="ChEBI" id="CHEBI:18420"/>
    </ligand>
</feature>
<feature type="binding site" evidence="1">
    <location>
        <position position="121"/>
    </location>
    <ligand>
        <name>[2Fe-2S] cluster</name>
        <dbReference type="ChEBI" id="CHEBI:190135"/>
    </ligand>
</feature>
<feature type="binding site" evidence="1">
    <location>
        <position position="122"/>
    </location>
    <ligand>
        <name>Mg(2+)</name>
        <dbReference type="ChEBI" id="CHEBI:18420"/>
    </ligand>
</feature>
<feature type="binding site" description="via carbamate group" evidence="1">
    <location>
        <position position="123"/>
    </location>
    <ligand>
        <name>Mg(2+)</name>
        <dbReference type="ChEBI" id="CHEBI:18420"/>
    </ligand>
</feature>
<feature type="binding site" evidence="1">
    <location>
        <position position="193"/>
    </location>
    <ligand>
        <name>[2Fe-2S] cluster</name>
        <dbReference type="ChEBI" id="CHEBI:190135"/>
    </ligand>
</feature>
<feature type="binding site" evidence="1">
    <location>
        <position position="444"/>
    </location>
    <ligand>
        <name>Mg(2+)</name>
        <dbReference type="ChEBI" id="CHEBI:18420"/>
    </ligand>
</feature>
<feature type="modified residue" description="N6-carboxylysine" evidence="1">
    <location>
        <position position="123"/>
    </location>
</feature>
<name>ILVD_TREPR</name>
<sequence>MNTNSRRITHGFTRSPNRAMLCAMGYDGADFAKPIIGVGSGYSTITPCNAGIQRVVDAAKAMLARHGAMTQVFGIPTISDGISMGTPGMRYSLVSREVIADCIEACACGQSMDGLLVVGGCDKNLPGGMIGLLRANIPGIYLYGGTILPGYWGARELTVVSSFEAVGAMGRQGMSIDAMREVERHACPTTGSCGGMYTANTMSASFEALGMSLLYSSTAPSPGIEGELSISTSARSLINAVRRGIRPRDVVTHRSIRNAMAVVMAVGGSTNAVLHYLAIAAAARSALSLHDVELIRRRVPVICNMKPSGLHSTADLHSAGGVPRVMHELALAGLIDESCLTITGRTIGAELLAAHRKRHGSTVVLPTNMALYRTGRLVVLSGNMSRNGAVAKTSGLSILLHSGTARVFRSEEACVQAILNGCVRIGDVVVLIYLGPKGGPGMPEMLSPTAALVGMGLGQSACLITDGRFSGGTWGLVVGHVSPEAAVGGSIALVRNGDFITVDLRNNSLHLHIDAWSLAARRAAWRLPCTLCVEGLLRKYHDGVGQSHNGAIAA</sequence>